<dbReference type="EC" id="5.3.1.16" evidence="1"/>
<dbReference type="EMBL" id="CP000463">
    <property type="protein sequence ID" value="ABJ04326.1"/>
    <property type="molecule type" value="Genomic_DNA"/>
</dbReference>
<dbReference type="SMR" id="Q07UQ8"/>
<dbReference type="STRING" id="316055.RPE_0367"/>
<dbReference type="KEGG" id="rpe:RPE_0367"/>
<dbReference type="eggNOG" id="COG0106">
    <property type="taxonomic scope" value="Bacteria"/>
</dbReference>
<dbReference type="HOGENOM" id="CLU_048577_1_1_5"/>
<dbReference type="OrthoDB" id="9807749at2"/>
<dbReference type="UniPathway" id="UPA00031">
    <property type="reaction ID" value="UER00009"/>
</dbReference>
<dbReference type="GO" id="GO:0005737">
    <property type="term" value="C:cytoplasm"/>
    <property type="evidence" value="ECO:0007669"/>
    <property type="project" value="UniProtKB-SubCell"/>
</dbReference>
<dbReference type="GO" id="GO:0003949">
    <property type="term" value="F:1-(5-phosphoribosyl)-5-[(5-phosphoribosylamino)methylideneamino]imidazole-4-carboxamide isomerase activity"/>
    <property type="evidence" value="ECO:0007669"/>
    <property type="project" value="UniProtKB-UniRule"/>
</dbReference>
<dbReference type="GO" id="GO:0000105">
    <property type="term" value="P:L-histidine biosynthetic process"/>
    <property type="evidence" value="ECO:0007669"/>
    <property type="project" value="UniProtKB-UniRule"/>
</dbReference>
<dbReference type="GO" id="GO:0000162">
    <property type="term" value="P:L-tryptophan biosynthetic process"/>
    <property type="evidence" value="ECO:0007669"/>
    <property type="project" value="TreeGrafter"/>
</dbReference>
<dbReference type="CDD" id="cd04732">
    <property type="entry name" value="HisA"/>
    <property type="match status" value="1"/>
</dbReference>
<dbReference type="FunFam" id="3.20.20.70:FF:000009">
    <property type="entry name" value="1-(5-phosphoribosyl)-5-[(5-phosphoribosylamino)methylideneamino] imidazole-4-carboxamide isomerase"/>
    <property type="match status" value="1"/>
</dbReference>
<dbReference type="Gene3D" id="3.20.20.70">
    <property type="entry name" value="Aldolase class I"/>
    <property type="match status" value="1"/>
</dbReference>
<dbReference type="HAMAP" id="MF_01014">
    <property type="entry name" value="HisA"/>
    <property type="match status" value="1"/>
</dbReference>
<dbReference type="InterPro" id="IPR013785">
    <property type="entry name" value="Aldolase_TIM"/>
</dbReference>
<dbReference type="InterPro" id="IPR006062">
    <property type="entry name" value="His_biosynth"/>
</dbReference>
<dbReference type="InterPro" id="IPR006063">
    <property type="entry name" value="HisA_bact_arch"/>
</dbReference>
<dbReference type="InterPro" id="IPR044524">
    <property type="entry name" value="Isoase_HisA-like"/>
</dbReference>
<dbReference type="InterPro" id="IPR023016">
    <property type="entry name" value="Isoase_HisA-like_bact"/>
</dbReference>
<dbReference type="InterPro" id="IPR011060">
    <property type="entry name" value="RibuloseP-bd_barrel"/>
</dbReference>
<dbReference type="NCBIfam" id="TIGR00007">
    <property type="entry name" value="1-(5-phosphoribosyl)-5-[(5-phosphoribosylamino)methylideneamino]imidazole-4-carboxamide isomerase"/>
    <property type="match status" value="1"/>
</dbReference>
<dbReference type="NCBIfam" id="NF010112">
    <property type="entry name" value="PRK13585.1"/>
    <property type="match status" value="1"/>
</dbReference>
<dbReference type="PANTHER" id="PTHR43090">
    <property type="entry name" value="1-(5-PHOSPHORIBOSYL)-5-[(5-PHOSPHORIBOSYLAMINO)METHYLIDENEAMINO] IMIDAZOLE-4-CARBOXAMIDE ISOMERASE"/>
    <property type="match status" value="1"/>
</dbReference>
<dbReference type="PANTHER" id="PTHR43090:SF2">
    <property type="entry name" value="1-(5-PHOSPHORIBOSYL)-5-[(5-PHOSPHORIBOSYLAMINO)METHYLIDENEAMINO] IMIDAZOLE-4-CARBOXAMIDE ISOMERASE"/>
    <property type="match status" value="1"/>
</dbReference>
<dbReference type="Pfam" id="PF00977">
    <property type="entry name" value="His_biosynth"/>
    <property type="match status" value="1"/>
</dbReference>
<dbReference type="SUPFAM" id="SSF51366">
    <property type="entry name" value="Ribulose-phoshate binding barrel"/>
    <property type="match status" value="1"/>
</dbReference>
<reference key="1">
    <citation type="submission" date="2006-09" db="EMBL/GenBank/DDBJ databases">
        <title>Complete sequence of Rhodopseudomonas palustris BisA53.</title>
        <authorList>
            <consortium name="US DOE Joint Genome Institute"/>
            <person name="Copeland A."/>
            <person name="Lucas S."/>
            <person name="Lapidus A."/>
            <person name="Barry K."/>
            <person name="Detter J.C."/>
            <person name="Glavina del Rio T."/>
            <person name="Hammon N."/>
            <person name="Israni S."/>
            <person name="Dalin E."/>
            <person name="Tice H."/>
            <person name="Pitluck S."/>
            <person name="Chain P."/>
            <person name="Malfatti S."/>
            <person name="Shin M."/>
            <person name="Vergez L."/>
            <person name="Schmutz J."/>
            <person name="Larimer F."/>
            <person name="Land M."/>
            <person name="Hauser L."/>
            <person name="Pelletier D.A."/>
            <person name="Kyrpides N."/>
            <person name="Kim E."/>
            <person name="Harwood C.S."/>
            <person name="Oda Y."/>
            <person name="Richardson P."/>
        </authorList>
    </citation>
    <scope>NUCLEOTIDE SEQUENCE [LARGE SCALE GENOMIC DNA]</scope>
    <source>
        <strain>BisA53</strain>
    </source>
</reference>
<feature type="chain" id="PRO_0000290524" description="1-(5-phosphoribosyl)-5-[(5-phosphoribosylamino)methylideneamino] imidazole-4-carboxamide isomerase">
    <location>
        <begin position="1"/>
        <end position="245"/>
    </location>
</feature>
<feature type="active site" description="Proton acceptor" evidence="1">
    <location>
        <position position="8"/>
    </location>
</feature>
<feature type="active site" description="Proton donor" evidence="1">
    <location>
        <position position="129"/>
    </location>
</feature>
<comment type="catalytic activity">
    <reaction evidence="1">
        <text>1-(5-phospho-beta-D-ribosyl)-5-[(5-phospho-beta-D-ribosylamino)methylideneamino]imidazole-4-carboxamide = 5-[(5-phospho-1-deoxy-D-ribulos-1-ylimino)methylamino]-1-(5-phospho-beta-D-ribosyl)imidazole-4-carboxamide</text>
        <dbReference type="Rhea" id="RHEA:15469"/>
        <dbReference type="ChEBI" id="CHEBI:58435"/>
        <dbReference type="ChEBI" id="CHEBI:58525"/>
        <dbReference type="EC" id="5.3.1.16"/>
    </reaction>
</comment>
<comment type="pathway">
    <text evidence="1">Amino-acid biosynthesis; L-histidine biosynthesis; L-histidine from 5-phospho-alpha-D-ribose 1-diphosphate: step 4/9.</text>
</comment>
<comment type="subcellular location">
    <subcellularLocation>
        <location evidence="1">Cytoplasm</location>
    </subcellularLocation>
</comment>
<comment type="similarity">
    <text evidence="1">Belongs to the HisA/HisF family.</text>
</comment>
<accession>Q07UQ8</accession>
<gene>
    <name evidence="1" type="primary">hisA</name>
    <name type="ordered locus">RPE_0367</name>
</gene>
<organism>
    <name type="scientific">Rhodopseudomonas palustris (strain BisA53)</name>
    <dbReference type="NCBI Taxonomy" id="316055"/>
    <lineage>
        <taxon>Bacteria</taxon>
        <taxon>Pseudomonadati</taxon>
        <taxon>Pseudomonadota</taxon>
        <taxon>Alphaproteobacteria</taxon>
        <taxon>Hyphomicrobiales</taxon>
        <taxon>Nitrobacteraceae</taxon>
        <taxon>Rhodopseudomonas</taxon>
    </lineage>
</organism>
<keyword id="KW-0028">Amino-acid biosynthesis</keyword>
<keyword id="KW-0963">Cytoplasm</keyword>
<keyword id="KW-0368">Histidine biosynthesis</keyword>
<keyword id="KW-0413">Isomerase</keyword>
<sequence>MILFPAIDLKNGQCVRLEQGDMDRATVFNLDPAAQAASFAAQGFEYLHVVDLDGAFAGKPMNAQAVEAMLKVVKMPVQLGGGIRDLATIEAWLGKGVTRVIIGTAAVRDPALVKEAAKQFPGRVAVGLDARDGKVAVQGWAETSTVTALEIAQRFEDAGVAAIIFTDIARDGLLKGLNLDATIALAEAISIPVIASGGFASIDDVKALLEPRAKKLEGAIVGRALYDGRLDPAEALALIGRAAAA</sequence>
<evidence type="ECO:0000255" key="1">
    <source>
        <dbReference type="HAMAP-Rule" id="MF_01014"/>
    </source>
</evidence>
<name>HIS4_RHOP5</name>
<protein>
    <recommendedName>
        <fullName evidence="1">1-(5-phosphoribosyl)-5-[(5-phosphoribosylamino)methylideneamino] imidazole-4-carboxamide isomerase</fullName>
        <ecNumber evidence="1">5.3.1.16</ecNumber>
    </recommendedName>
    <alternativeName>
        <fullName evidence="1">Phosphoribosylformimino-5-aminoimidazole carboxamide ribotide isomerase</fullName>
    </alternativeName>
</protein>
<proteinExistence type="inferred from homology"/>